<comment type="function">
    <text evidence="4">Probable transcription factor involved in the regulation of flowering time under short day (SD) conditions. Functions as a promoter of flowering under SD conditions, upstream of EHD1, HD3A and MADS14, but downstream of GIGANTEA (GI). May transmit a SD promotion signal from GI to EHD1. Functions independently of MADS50 to control flowering time.</text>
</comment>
<comment type="subcellular location">
    <subcellularLocation>
        <location evidence="1">Nucleus</location>
    </subcellularLocation>
</comment>
<comment type="tissue specificity">
    <text evidence="3">Widely expressed.</text>
</comment>
<comment type="disruption phenotype">
    <text evidence="4">Late flowering under short day (SD) conditions.</text>
</comment>
<comment type="miscellaneous">
    <text evidence="4">Plant over-expressing MADS50 have an early flowering phenotype under short day (SD) conditions.</text>
</comment>
<name>MAD51_ORYSJ</name>
<proteinExistence type="evidence at transcript level"/>
<organism>
    <name type="scientific">Oryza sativa subsp. japonica</name>
    <name type="common">Rice</name>
    <dbReference type="NCBI Taxonomy" id="39947"/>
    <lineage>
        <taxon>Eukaryota</taxon>
        <taxon>Viridiplantae</taxon>
        <taxon>Streptophyta</taxon>
        <taxon>Embryophyta</taxon>
        <taxon>Tracheophyta</taxon>
        <taxon>Spermatophyta</taxon>
        <taxon>Magnoliopsida</taxon>
        <taxon>Liliopsida</taxon>
        <taxon>Poales</taxon>
        <taxon>Poaceae</taxon>
        <taxon>BOP clade</taxon>
        <taxon>Oryzoideae</taxon>
        <taxon>Oryzeae</taxon>
        <taxon>Oryzinae</taxon>
        <taxon>Oryza</taxon>
        <taxon>Oryza sativa</taxon>
    </lineage>
</organism>
<protein>
    <recommendedName>
        <fullName evidence="6">MADS-box transcription factor 51</fullName>
        <shortName evidence="5">OsMADS51</shortName>
    </recommendedName>
    <alternativeName>
        <fullName evidence="6">OsMADS65</fullName>
    </alternativeName>
</protein>
<keyword id="KW-0238">DNA-binding</keyword>
<keyword id="KW-0287">Flowering</keyword>
<keyword id="KW-0539">Nucleus</keyword>
<keyword id="KW-1185">Reference proteome</keyword>
<keyword id="KW-0804">Transcription</keyword>
<keyword id="KW-0805">Transcription regulation</keyword>
<sequence length="164" mass="18363">MARRGRVQLRRIEDKASRQVRFSKRRAGLFKKAFELALLCDVEVALLVFSPVGKLYEYSSSSIEGTYDRYQQFAGARRDLNEGSTSINSDENASIHSRLRDITAWSLQNNADESDANQLEKLEKLLTNALRDTKSKKMLAKQNGEGSRSRANSSGSRGQEEGSA</sequence>
<reference key="1">
    <citation type="journal article" date="1999" name="DNA Res.">
        <title>Isolation and characterization of rice MADS box gene homologues and their RFLP mapping.</title>
        <authorList>
            <person name="Shinozuka Y."/>
            <person name="Kojima S."/>
            <person name="Shomura A."/>
            <person name="Ichimura H."/>
            <person name="Yano M."/>
            <person name="Yamamoto K."/>
            <person name="Sasaki T."/>
        </authorList>
    </citation>
    <scope>NUCLEOTIDE SEQUENCE [MRNA]</scope>
    <scope>TISSUE SPECIFICITY</scope>
    <source>
        <strain>cv. Nipponbare</strain>
        <tissue>Shoot</tissue>
    </source>
</reference>
<reference key="2">
    <citation type="journal article" date="2002" name="Nature">
        <title>The genome sequence and structure of rice chromosome 1.</title>
        <authorList>
            <person name="Sasaki T."/>
            <person name="Matsumoto T."/>
            <person name="Yamamoto K."/>
            <person name="Sakata K."/>
            <person name="Baba T."/>
            <person name="Katayose Y."/>
            <person name="Wu J."/>
            <person name="Niimura Y."/>
            <person name="Cheng Z."/>
            <person name="Nagamura Y."/>
            <person name="Antonio B.A."/>
            <person name="Kanamori H."/>
            <person name="Hosokawa S."/>
            <person name="Masukawa M."/>
            <person name="Arikawa K."/>
            <person name="Chiden Y."/>
            <person name="Hayashi M."/>
            <person name="Okamoto M."/>
            <person name="Ando T."/>
            <person name="Aoki H."/>
            <person name="Arita K."/>
            <person name="Hamada M."/>
            <person name="Harada C."/>
            <person name="Hijishita S."/>
            <person name="Honda M."/>
            <person name="Ichikawa Y."/>
            <person name="Idonuma A."/>
            <person name="Iijima M."/>
            <person name="Ikeda M."/>
            <person name="Ikeno M."/>
            <person name="Ito S."/>
            <person name="Ito T."/>
            <person name="Ito Y."/>
            <person name="Ito Y."/>
            <person name="Iwabuchi A."/>
            <person name="Kamiya K."/>
            <person name="Karasawa W."/>
            <person name="Katagiri S."/>
            <person name="Kikuta A."/>
            <person name="Kobayashi N."/>
            <person name="Kono I."/>
            <person name="Machita K."/>
            <person name="Maehara T."/>
            <person name="Mizuno H."/>
            <person name="Mizubayashi T."/>
            <person name="Mukai Y."/>
            <person name="Nagasaki H."/>
            <person name="Nakashima M."/>
            <person name="Nakama Y."/>
            <person name="Nakamichi Y."/>
            <person name="Nakamura M."/>
            <person name="Namiki N."/>
            <person name="Negishi M."/>
            <person name="Ohta I."/>
            <person name="Ono N."/>
            <person name="Saji S."/>
            <person name="Sakai K."/>
            <person name="Shibata M."/>
            <person name="Shimokawa T."/>
            <person name="Shomura A."/>
            <person name="Song J."/>
            <person name="Takazaki Y."/>
            <person name="Terasawa K."/>
            <person name="Tsuji K."/>
            <person name="Waki K."/>
            <person name="Yamagata H."/>
            <person name="Yamane H."/>
            <person name="Yoshiki S."/>
            <person name="Yoshihara R."/>
            <person name="Yukawa K."/>
            <person name="Zhong H."/>
            <person name="Iwama H."/>
            <person name="Endo T."/>
            <person name="Ito H."/>
            <person name="Hahn J.H."/>
            <person name="Kim H.-I."/>
            <person name="Eun M.-Y."/>
            <person name="Yano M."/>
            <person name="Jiang J."/>
            <person name="Gojobori T."/>
        </authorList>
    </citation>
    <scope>NUCLEOTIDE SEQUENCE [LARGE SCALE GENOMIC DNA]</scope>
    <source>
        <strain>cv. Nipponbare</strain>
    </source>
</reference>
<reference key="3">
    <citation type="journal article" date="2005" name="Nature">
        <title>The map-based sequence of the rice genome.</title>
        <authorList>
            <consortium name="International rice genome sequencing project (IRGSP)"/>
        </authorList>
    </citation>
    <scope>NUCLEOTIDE SEQUENCE [LARGE SCALE GENOMIC DNA]</scope>
    <source>
        <strain>cv. Nipponbare</strain>
    </source>
</reference>
<reference key="4">
    <citation type="journal article" date="2008" name="Nucleic Acids Res.">
        <title>The rice annotation project database (RAP-DB): 2008 update.</title>
        <authorList>
            <consortium name="The rice annotation project (RAP)"/>
        </authorList>
    </citation>
    <scope>GENOME REANNOTATION</scope>
    <source>
        <strain>cv. Nipponbare</strain>
    </source>
</reference>
<reference key="5">
    <citation type="journal article" date="2013" name="Rice">
        <title>Improvement of the Oryza sativa Nipponbare reference genome using next generation sequence and optical map data.</title>
        <authorList>
            <person name="Kawahara Y."/>
            <person name="de la Bastide M."/>
            <person name="Hamilton J.P."/>
            <person name="Kanamori H."/>
            <person name="McCombie W.R."/>
            <person name="Ouyang S."/>
            <person name="Schwartz D.C."/>
            <person name="Tanaka T."/>
            <person name="Wu J."/>
            <person name="Zhou S."/>
            <person name="Childs K.L."/>
            <person name="Davidson R.M."/>
            <person name="Lin H."/>
            <person name="Quesada-Ocampo L."/>
            <person name="Vaillancourt B."/>
            <person name="Sakai H."/>
            <person name="Lee S.S."/>
            <person name="Kim J."/>
            <person name="Numa H."/>
            <person name="Itoh T."/>
            <person name="Buell C.R."/>
            <person name="Matsumoto T."/>
        </authorList>
    </citation>
    <scope>GENOME REANNOTATION</scope>
    <source>
        <strain>cv. Nipponbare</strain>
    </source>
</reference>
<reference key="6">
    <citation type="journal article" date="2003" name="Science">
        <title>Collection, mapping, and annotation of over 28,000 cDNA clones from japonica rice.</title>
        <authorList>
            <consortium name="The rice full-length cDNA consortium"/>
        </authorList>
    </citation>
    <scope>NUCLEOTIDE SEQUENCE [LARGE SCALE MRNA]</scope>
    <source>
        <strain>cv. Nipponbare</strain>
    </source>
</reference>
<reference key="7">
    <citation type="journal article" date="2007" name="Plant Physiol.">
        <title>OsMADS51 is a short-day flowering promoter that functions upstream of Ehd1, OsMADS14, and Hd3a.</title>
        <authorList>
            <person name="Kim S.L."/>
            <person name="Lee S."/>
            <person name="Kim H.J."/>
            <person name="Nam H.G."/>
            <person name="An G."/>
        </authorList>
    </citation>
    <scope>FUNCTION</scope>
    <scope>DISRUPTION PHENOTYPE</scope>
</reference>
<gene>
    <name evidence="5" type="primary">MADS51</name>
    <name evidence="8" type="ordered locus">Os01g0922800</name>
    <name evidence="6" type="ordered locus">LOC_Os01g69850</name>
    <name evidence="7" type="ORF">B1455F06.16</name>
</gene>
<accession>Q9XJ61</accession>
<dbReference type="EMBL" id="AB003327">
    <property type="protein sequence ID" value="BAA81885.1"/>
    <property type="molecule type" value="mRNA"/>
</dbReference>
<dbReference type="EMBL" id="AP006167">
    <property type="protein sequence ID" value="BAD88318.1"/>
    <property type="molecule type" value="Genomic_DNA"/>
</dbReference>
<dbReference type="EMBL" id="AP008207">
    <property type="protein sequence ID" value="BAF07149.1"/>
    <property type="molecule type" value="Genomic_DNA"/>
</dbReference>
<dbReference type="EMBL" id="AP014957">
    <property type="protein sequence ID" value="BAS75953.1"/>
    <property type="molecule type" value="Genomic_DNA"/>
</dbReference>
<dbReference type="EMBL" id="AK066160">
    <property type="protein sequence ID" value="BAG89847.1"/>
    <property type="molecule type" value="mRNA"/>
</dbReference>
<dbReference type="SMR" id="Q9XJ61"/>
<dbReference type="FunCoup" id="Q9XJ61">
    <property type="interactions" value="52"/>
</dbReference>
<dbReference type="STRING" id="39947.Q9XJ61"/>
<dbReference type="PaxDb" id="39947-Q9XJ61"/>
<dbReference type="EnsemblPlants" id="Os01t0922800-01">
    <property type="protein sequence ID" value="Os01t0922800-01"/>
    <property type="gene ID" value="Os01g0922800"/>
</dbReference>
<dbReference type="Gramene" id="Os01t0922800-01">
    <property type="protein sequence ID" value="Os01t0922800-01"/>
    <property type="gene ID" value="Os01g0922800"/>
</dbReference>
<dbReference type="KEGG" id="dosa:Os01g0922800"/>
<dbReference type="eggNOG" id="KOG0014">
    <property type="taxonomic scope" value="Eukaryota"/>
</dbReference>
<dbReference type="HOGENOM" id="CLU_053053_0_4_1"/>
<dbReference type="InParanoid" id="Q9XJ61"/>
<dbReference type="OMA" id="TAWSLQN"/>
<dbReference type="PlantReactome" id="R-OSA-8934108">
    <property type="pathway name" value="Short day regulated expression of florigens"/>
</dbReference>
<dbReference type="Proteomes" id="UP000000763">
    <property type="component" value="Chromosome 1"/>
</dbReference>
<dbReference type="Proteomes" id="UP000059680">
    <property type="component" value="Chromosome 1"/>
</dbReference>
<dbReference type="GO" id="GO:0005634">
    <property type="term" value="C:nucleus"/>
    <property type="evidence" value="ECO:0007669"/>
    <property type="project" value="UniProtKB-SubCell"/>
</dbReference>
<dbReference type="GO" id="GO:0000981">
    <property type="term" value="F:DNA-binding transcription factor activity, RNA polymerase II-specific"/>
    <property type="evidence" value="ECO:0000318"/>
    <property type="project" value="GO_Central"/>
</dbReference>
<dbReference type="GO" id="GO:0046983">
    <property type="term" value="F:protein dimerization activity"/>
    <property type="evidence" value="ECO:0007669"/>
    <property type="project" value="InterPro"/>
</dbReference>
<dbReference type="GO" id="GO:0000978">
    <property type="term" value="F:RNA polymerase II cis-regulatory region sequence-specific DNA binding"/>
    <property type="evidence" value="ECO:0000318"/>
    <property type="project" value="GO_Central"/>
</dbReference>
<dbReference type="GO" id="GO:0009908">
    <property type="term" value="P:flower development"/>
    <property type="evidence" value="ECO:0007669"/>
    <property type="project" value="UniProtKB-KW"/>
</dbReference>
<dbReference type="GO" id="GO:0048576">
    <property type="term" value="P:positive regulation of short-day photoperiodism, flowering"/>
    <property type="evidence" value="ECO:0000315"/>
    <property type="project" value="UniProtKB"/>
</dbReference>
<dbReference type="GO" id="GO:0045944">
    <property type="term" value="P:positive regulation of transcription by RNA polymerase II"/>
    <property type="evidence" value="ECO:0007669"/>
    <property type="project" value="InterPro"/>
</dbReference>
<dbReference type="GO" id="GO:0006357">
    <property type="term" value="P:regulation of transcription by RNA polymerase II"/>
    <property type="evidence" value="ECO:0000318"/>
    <property type="project" value="GO_Central"/>
</dbReference>
<dbReference type="CDD" id="cd00265">
    <property type="entry name" value="MADS_MEF2_like"/>
    <property type="match status" value="1"/>
</dbReference>
<dbReference type="FunFam" id="3.40.1810.10:FF:000008">
    <property type="entry name" value="MADS-box transcription factor 1"/>
    <property type="match status" value="1"/>
</dbReference>
<dbReference type="Gene3D" id="3.40.1810.10">
    <property type="entry name" value="Transcription factor, MADS-box"/>
    <property type="match status" value="1"/>
</dbReference>
<dbReference type="InterPro" id="IPR050142">
    <property type="entry name" value="MADS-box/MEF2_TF"/>
</dbReference>
<dbReference type="InterPro" id="IPR033896">
    <property type="entry name" value="MEF2-like_N"/>
</dbReference>
<dbReference type="InterPro" id="IPR002100">
    <property type="entry name" value="TF_MADSbox"/>
</dbReference>
<dbReference type="InterPro" id="IPR036879">
    <property type="entry name" value="TF_MADSbox_sf"/>
</dbReference>
<dbReference type="PANTHER" id="PTHR48019">
    <property type="entry name" value="SERUM RESPONSE FACTOR HOMOLOG"/>
    <property type="match status" value="1"/>
</dbReference>
<dbReference type="Pfam" id="PF00319">
    <property type="entry name" value="SRF-TF"/>
    <property type="match status" value="1"/>
</dbReference>
<dbReference type="PRINTS" id="PR00404">
    <property type="entry name" value="MADSDOMAIN"/>
</dbReference>
<dbReference type="SMART" id="SM00432">
    <property type="entry name" value="MADS"/>
    <property type="match status" value="1"/>
</dbReference>
<dbReference type="SUPFAM" id="SSF55455">
    <property type="entry name" value="SRF-like"/>
    <property type="match status" value="1"/>
</dbReference>
<dbReference type="PROSITE" id="PS50066">
    <property type="entry name" value="MADS_BOX_2"/>
    <property type="match status" value="1"/>
</dbReference>
<feature type="chain" id="PRO_0000437439" description="MADS-box transcription factor 51">
    <location>
        <begin position="1"/>
        <end position="164"/>
    </location>
</feature>
<feature type="domain" description="MADS-box" evidence="1">
    <location>
        <begin position="2"/>
        <end position="62"/>
    </location>
</feature>
<feature type="region of interest" description="Disordered" evidence="2">
    <location>
        <begin position="133"/>
        <end position="164"/>
    </location>
</feature>
<evidence type="ECO:0000255" key="1">
    <source>
        <dbReference type="PROSITE-ProRule" id="PRU00251"/>
    </source>
</evidence>
<evidence type="ECO:0000256" key="2">
    <source>
        <dbReference type="SAM" id="MobiDB-lite"/>
    </source>
</evidence>
<evidence type="ECO:0000269" key="3">
    <source>
    </source>
</evidence>
<evidence type="ECO:0000269" key="4">
    <source>
    </source>
</evidence>
<evidence type="ECO:0000303" key="5">
    <source>
    </source>
</evidence>
<evidence type="ECO:0000305" key="6"/>
<evidence type="ECO:0000312" key="7">
    <source>
        <dbReference type="EMBL" id="BAD88318.1"/>
    </source>
</evidence>
<evidence type="ECO:0000312" key="8">
    <source>
        <dbReference type="EMBL" id="BAF07149.1"/>
    </source>
</evidence>